<evidence type="ECO:0000250" key="1"/>
<evidence type="ECO:0000250" key="2">
    <source>
        <dbReference type="UniProtKB" id="O15205"/>
    </source>
</evidence>
<evidence type="ECO:0000250" key="3">
    <source>
        <dbReference type="UniProtKB" id="P63072"/>
    </source>
</evidence>
<evidence type="ECO:0000255" key="4">
    <source>
        <dbReference type="PROSITE-ProRule" id="PRU00214"/>
    </source>
</evidence>
<evidence type="ECO:0000305" key="5"/>
<protein>
    <recommendedName>
        <fullName>Ubiquitin D</fullName>
    </recommendedName>
    <alternativeName>
        <fullName>Diubiquitin</fullName>
    </alternativeName>
    <alternativeName>
        <fullName evidence="2">Ubiquitin-like protein FAT10</fullName>
    </alternativeName>
</protein>
<feature type="chain" id="PRO_0000114895" description="Ubiquitin D">
    <location>
        <begin position="1"/>
        <end position="161"/>
    </location>
</feature>
<feature type="domain" description="Ubiquitin-like 1" evidence="4">
    <location>
        <begin position="3"/>
        <end position="77"/>
    </location>
</feature>
<feature type="domain" description="Ubiquitin-like 2" evidence="4">
    <location>
        <begin position="86"/>
        <end position="159"/>
    </location>
</feature>
<feature type="site" description="Activation by thioester intermediate formation with UBA6" evidence="1">
    <location>
        <begin position="160"/>
        <end position="161"/>
    </location>
</feature>
<feature type="sequence conflict" description="In Ref. 2; CAE84074." evidence="5" ref="2">
    <original>R</original>
    <variation>H</variation>
    <location>
        <position position="9"/>
    </location>
</feature>
<feature type="sequence conflict" description="In Ref. 2; CAE84074." evidence="5" ref="2">
    <original>I</original>
    <variation>F</variation>
    <location>
        <position position="127"/>
    </location>
</feature>
<sequence>MASCVCVVRSEQWPLMTFDTTMSDKVKKINEHIRSQTKVSVQDQILLLDSKILKPHRALSSYGIDKENTIHLTLKVVKPSDEELPLSLVESGDEGQRHLLRVRRSSSVAQVKEMIENVTAVPPKKQIVNCNGKRLEDGKIMADYNIKSGSLLFLTAHCIGG</sequence>
<name>UBD_RAT</name>
<accession>Q921A3</accession>
<accession>Q6MFX3</accession>
<dbReference type="EMBL" id="AJ312394">
    <property type="protein sequence ID" value="CAC42833.1"/>
    <property type="molecule type" value="mRNA"/>
</dbReference>
<dbReference type="EMBL" id="BX883052">
    <property type="protein sequence ID" value="CAE84074.1"/>
    <property type="molecule type" value="Genomic_DNA"/>
</dbReference>
<dbReference type="RefSeq" id="NP_445751.2">
    <property type="nucleotide sequence ID" value="NM_053299.2"/>
</dbReference>
<dbReference type="SMR" id="Q921A3"/>
<dbReference type="STRING" id="10116.ENSRNOP00000000995"/>
<dbReference type="PhosphoSitePlus" id="Q921A3"/>
<dbReference type="PaxDb" id="10116-ENSRNOP00000000995"/>
<dbReference type="GeneID" id="29168"/>
<dbReference type="KEGG" id="rno:29168"/>
<dbReference type="UCSC" id="RGD:69418">
    <property type="organism name" value="rat"/>
</dbReference>
<dbReference type="AGR" id="RGD:69418"/>
<dbReference type="CTD" id="10537"/>
<dbReference type="RGD" id="69418">
    <property type="gene designation" value="Ubd"/>
</dbReference>
<dbReference type="eggNOG" id="KOG0001">
    <property type="taxonomic scope" value="Eukaryota"/>
</dbReference>
<dbReference type="InParanoid" id="Q921A3"/>
<dbReference type="OrthoDB" id="14910at9989"/>
<dbReference type="PhylomeDB" id="Q921A3"/>
<dbReference type="Reactome" id="R-RNO-8951664">
    <property type="pathway name" value="Neddylation"/>
</dbReference>
<dbReference type="PRO" id="PR:Q921A3"/>
<dbReference type="Proteomes" id="UP000002494">
    <property type="component" value="Unplaced"/>
</dbReference>
<dbReference type="GO" id="GO:0016235">
    <property type="term" value="C:aggresome"/>
    <property type="evidence" value="ECO:0000250"/>
    <property type="project" value="UniProtKB"/>
</dbReference>
<dbReference type="GO" id="GO:0005737">
    <property type="term" value="C:cytoplasm"/>
    <property type="evidence" value="ECO:0000250"/>
    <property type="project" value="UniProtKB"/>
</dbReference>
<dbReference type="GO" id="GO:0005634">
    <property type="term" value="C:nucleus"/>
    <property type="evidence" value="ECO:0000250"/>
    <property type="project" value="UniProtKB"/>
</dbReference>
<dbReference type="GO" id="GO:0070628">
    <property type="term" value="F:proteasome binding"/>
    <property type="evidence" value="ECO:0000250"/>
    <property type="project" value="UniProtKB"/>
</dbReference>
<dbReference type="GO" id="GO:0070842">
    <property type="term" value="P:aggresome assembly"/>
    <property type="evidence" value="ECO:0000250"/>
    <property type="project" value="UniProtKB"/>
</dbReference>
<dbReference type="GO" id="GO:0043011">
    <property type="term" value="P:myeloid dendritic cell differentiation"/>
    <property type="evidence" value="ECO:0000250"/>
    <property type="project" value="UniProtKB"/>
</dbReference>
<dbReference type="GO" id="GO:0043065">
    <property type="term" value="P:positive regulation of apoptotic process"/>
    <property type="evidence" value="ECO:0000250"/>
    <property type="project" value="UniProtKB"/>
</dbReference>
<dbReference type="GO" id="GO:0043123">
    <property type="term" value="P:positive regulation of canonical NF-kappaB signal transduction"/>
    <property type="evidence" value="ECO:0000250"/>
    <property type="project" value="UniProtKB"/>
</dbReference>
<dbReference type="GO" id="GO:0016567">
    <property type="term" value="P:protein ubiquitination"/>
    <property type="evidence" value="ECO:0000250"/>
    <property type="project" value="UniProtKB"/>
</dbReference>
<dbReference type="GO" id="GO:1901990">
    <property type="term" value="P:regulation of mitotic cell cycle phase transition"/>
    <property type="evidence" value="ECO:0000250"/>
    <property type="project" value="UniProtKB"/>
</dbReference>
<dbReference type="GO" id="GO:0001666">
    <property type="term" value="P:response to hypoxia"/>
    <property type="evidence" value="ECO:0000270"/>
    <property type="project" value="RGD"/>
</dbReference>
<dbReference type="GO" id="GO:0002931">
    <property type="term" value="P:response to ischemia"/>
    <property type="evidence" value="ECO:0000270"/>
    <property type="project" value="RGD"/>
</dbReference>
<dbReference type="GO" id="GO:0034612">
    <property type="term" value="P:response to tumor necrosis factor"/>
    <property type="evidence" value="ECO:0000266"/>
    <property type="project" value="RGD"/>
</dbReference>
<dbReference type="GO" id="GO:0034341">
    <property type="term" value="P:response to type II interferon"/>
    <property type="evidence" value="ECO:0000266"/>
    <property type="project" value="RGD"/>
</dbReference>
<dbReference type="GO" id="GO:0006511">
    <property type="term" value="P:ubiquitin-dependent protein catabolic process"/>
    <property type="evidence" value="ECO:0000250"/>
    <property type="project" value="UniProtKB"/>
</dbReference>
<dbReference type="CDD" id="cd17053">
    <property type="entry name" value="Ubl2_FAT10"/>
    <property type="match status" value="1"/>
</dbReference>
<dbReference type="FunFam" id="3.10.20.90:FF:000234">
    <property type="entry name" value="Ubiquitin D"/>
    <property type="match status" value="1"/>
</dbReference>
<dbReference type="FunFam" id="3.10.20.90:FF:000249">
    <property type="entry name" value="Ubiquitin D"/>
    <property type="match status" value="1"/>
</dbReference>
<dbReference type="Gene3D" id="3.10.20.90">
    <property type="entry name" value="Phosphatidylinositol 3-kinase Catalytic Subunit, Chain A, domain 1"/>
    <property type="match status" value="2"/>
</dbReference>
<dbReference type="InterPro" id="IPR000626">
    <property type="entry name" value="Ubiquitin-like_dom"/>
</dbReference>
<dbReference type="InterPro" id="IPR029071">
    <property type="entry name" value="Ubiquitin-like_domsf"/>
</dbReference>
<dbReference type="InterPro" id="IPR042969">
    <property type="entry name" value="Ubiquitin_D"/>
</dbReference>
<dbReference type="InterPro" id="IPR019956">
    <property type="entry name" value="Ubiquitin_dom"/>
</dbReference>
<dbReference type="PANTHER" id="PTHR47731">
    <property type="entry name" value="UBIQUITIN D"/>
    <property type="match status" value="1"/>
</dbReference>
<dbReference type="PANTHER" id="PTHR47731:SF1">
    <property type="entry name" value="UBIQUITIN D"/>
    <property type="match status" value="1"/>
</dbReference>
<dbReference type="Pfam" id="PF00240">
    <property type="entry name" value="ubiquitin"/>
    <property type="match status" value="2"/>
</dbReference>
<dbReference type="PRINTS" id="PR00348">
    <property type="entry name" value="UBIQUITIN"/>
</dbReference>
<dbReference type="SMART" id="SM00213">
    <property type="entry name" value="UBQ"/>
    <property type="match status" value="2"/>
</dbReference>
<dbReference type="SUPFAM" id="SSF54236">
    <property type="entry name" value="Ubiquitin-like"/>
    <property type="match status" value="2"/>
</dbReference>
<dbReference type="PROSITE" id="PS50053">
    <property type="entry name" value="UBIQUITIN_2"/>
    <property type="match status" value="2"/>
</dbReference>
<organism>
    <name type="scientific">Rattus norvegicus</name>
    <name type="common">Rat</name>
    <dbReference type="NCBI Taxonomy" id="10116"/>
    <lineage>
        <taxon>Eukaryota</taxon>
        <taxon>Metazoa</taxon>
        <taxon>Chordata</taxon>
        <taxon>Craniata</taxon>
        <taxon>Vertebrata</taxon>
        <taxon>Euteleostomi</taxon>
        <taxon>Mammalia</taxon>
        <taxon>Eutheria</taxon>
        <taxon>Euarchontoglires</taxon>
        <taxon>Glires</taxon>
        <taxon>Rodentia</taxon>
        <taxon>Myomorpha</taxon>
        <taxon>Muroidea</taxon>
        <taxon>Muridae</taxon>
        <taxon>Murinae</taxon>
        <taxon>Rattus</taxon>
    </lineage>
</organism>
<proteinExistence type="evidence at protein level"/>
<gene>
    <name type="primary">Ubd</name>
    <name type="synonym">Fat10</name>
</gene>
<comment type="function">
    <text evidence="2">Ubiquitin-like protein modifier which can be covalently attached to target proteins and subsequently leads to their degradation by the 26S proteasome, in a NUB1-dependent manner (By similarity). Conjugation to the target protein is activated by UBA6 via adenylation of its C-terminal glycine (By similarity). Probably functions as a survival factor. Promotes the expression of the proteasome subunit beta type-9 (PSMB9/LMP2). Regulates TNF-alpha-induced and LPS-mediated activation of the central mediator of innate immunity NF-kappa-B by promoting TNF-alpha-mediated proteasomal degradation of ubiquitinated-I-kappa-B-alpha (By similarity). Required for TNF-alpha-induced p65 nuclear translocation in renal tubular epithelial cells (RTECs). May be involved in dendritic cell (DC) maturation, the process by which immature dendritic cells differentiate into fully competent antigen-presenting cells that initiate T-cell responses (By similarity). Mediates mitotic non-disjunction and chromosome instability, in long-term in vitro culture and cancers, by abbreviating mitotic phase and impairing the kinetochore localization of MAD2L1 during the prometaphase stage of the cell cycle (By similarity). May be involved in the formation of aggresomes when proteasome is saturated or impaired (By similarity). Mediates apoptosis in a caspase-dependent manner, especially in renal epithelium and tubular cells during renal diseases (By similarity).</text>
</comment>
<comment type="subunit">
    <text evidence="2">Interacts directly with the 26S proteasome (By similarity). Interacts with NUB1; this interaction facilitates the linking of UBD-conjugated target protein to the proteasome complex and accelerates its own degradation and that of its conjugates (By similarity). Interacts (via ubiquitin-like 1 domain) with the spindle checkpoint protein MAD2L1 during mitosis (By similarity). Present in aggresomes of proteasome inhibited cells (By similarity). Interacts with HDAC6 under proteasome impairment conditions (By similarity). Forms a thioester with UBA6 in cells stimulated with tumor necrosis factor-alpha (TNFa) and interferon-gamma (IFNg) (By similarity). Interacts with SQSTM1 and TP53/p53 (By similarity).</text>
</comment>
<comment type="subcellular location">
    <subcellularLocation>
        <location evidence="2">Nucleus</location>
    </subcellularLocation>
    <subcellularLocation>
        <location evidence="3">Cytoplasm</location>
    </subcellularLocation>
    <text>Accumulates in aggresomes under proteasome inhibition conditions.</text>
</comment>
<comment type="induction">
    <text>Possible cell-cycle regulation with highest expression during the S-phase (at protein level). Probably rapidly degraded by the proteasome.</text>
</comment>
<comment type="PTM">
    <text evidence="2">Can be acetylated.</text>
</comment>
<comment type="similarity">
    <text evidence="5">Belongs to the ubiquitin D family.</text>
</comment>
<reference key="1">
    <citation type="submission" date="2001-06" db="EMBL/GenBank/DDBJ databases">
        <title>Characterization of the rat Ubd gene.</title>
        <authorList>
            <person name="Walter L."/>
        </authorList>
    </citation>
    <scope>NUCLEOTIDE SEQUENCE [MRNA]</scope>
</reference>
<reference key="2">
    <citation type="journal article" date="2004" name="Genome Res.">
        <title>The genomic sequence and comparative analysis of the rat major histocompatibility complex.</title>
        <authorList>
            <person name="Hurt P."/>
            <person name="Walter L."/>
            <person name="Sudbrak R."/>
            <person name="Klages S."/>
            <person name="Mueller I."/>
            <person name="Shiina T."/>
            <person name="Inoko H."/>
            <person name="Lehrach H."/>
            <person name="Guenther E."/>
            <person name="Reinhardt R."/>
            <person name="Himmelbauer H."/>
        </authorList>
    </citation>
    <scope>NUCLEOTIDE SEQUENCE [LARGE SCALE GENOMIC DNA]</scope>
    <source>
        <strain>Brown Norway</strain>
    </source>
</reference>
<keyword id="KW-0007">Acetylation</keyword>
<keyword id="KW-0963">Cytoplasm</keyword>
<keyword id="KW-0539">Nucleus</keyword>
<keyword id="KW-1185">Reference proteome</keyword>
<keyword id="KW-0677">Repeat</keyword>
<keyword id="KW-0833">Ubl conjugation pathway</keyword>